<comment type="function">
    <text evidence="1">Large subunit of the glutamine-dependent carbamoyl phosphate synthetase (CPSase). CPSase catalyzes the formation of carbamoyl phosphate from the ammonia moiety of glutamine, carbonate, and phosphate donated by ATP, constituting the first step of 2 biosynthetic pathways, one leading to arginine and/or urea and the other to pyrimidine nucleotides. The large subunit (synthetase) binds the substrates ammonia (free or transferred from glutamine from the small subunit), hydrogencarbonate and ATP and carries out an ATP-coupled ligase reaction, activating hydrogencarbonate by forming carboxy phosphate which reacts with ammonia to form carbamoyl phosphate.</text>
</comment>
<comment type="catalytic activity">
    <reaction evidence="1">
        <text>hydrogencarbonate + L-glutamine + 2 ATP + H2O = carbamoyl phosphate + L-glutamate + 2 ADP + phosphate + 2 H(+)</text>
        <dbReference type="Rhea" id="RHEA:18633"/>
        <dbReference type="ChEBI" id="CHEBI:15377"/>
        <dbReference type="ChEBI" id="CHEBI:15378"/>
        <dbReference type="ChEBI" id="CHEBI:17544"/>
        <dbReference type="ChEBI" id="CHEBI:29985"/>
        <dbReference type="ChEBI" id="CHEBI:30616"/>
        <dbReference type="ChEBI" id="CHEBI:43474"/>
        <dbReference type="ChEBI" id="CHEBI:58228"/>
        <dbReference type="ChEBI" id="CHEBI:58359"/>
        <dbReference type="ChEBI" id="CHEBI:456216"/>
        <dbReference type="EC" id="6.3.5.5"/>
    </reaction>
</comment>
<comment type="catalytic activity">
    <molecule>Carbamoyl phosphate synthase large chain</molecule>
    <reaction evidence="1">
        <text>hydrogencarbonate + NH4(+) + 2 ATP = carbamoyl phosphate + 2 ADP + phosphate + 2 H(+)</text>
        <dbReference type="Rhea" id="RHEA:18029"/>
        <dbReference type="ChEBI" id="CHEBI:15378"/>
        <dbReference type="ChEBI" id="CHEBI:17544"/>
        <dbReference type="ChEBI" id="CHEBI:28938"/>
        <dbReference type="ChEBI" id="CHEBI:30616"/>
        <dbReference type="ChEBI" id="CHEBI:43474"/>
        <dbReference type="ChEBI" id="CHEBI:58228"/>
        <dbReference type="ChEBI" id="CHEBI:456216"/>
        <dbReference type="EC" id="6.3.4.16"/>
    </reaction>
</comment>
<comment type="cofactor">
    <cofactor evidence="1">
        <name>Mg(2+)</name>
        <dbReference type="ChEBI" id="CHEBI:18420"/>
    </cofactor>
    <cofactor evidence="1">
        <name>Mn(2+)</name>
        <dbReference type="ChEBI" id="CHEBI:29035"/>
    </cofactor>
    <text evidence="1">Binds 4 Mg(2+) or Mn(2+) ions per subunit.</text>
</comment>
<comment type="pathway">
    <text evidence="1">Amino-acid biosynthesis; L-arginine biosynthesis; carbamoyl phosphate from bicarbonate: step 1/1.</text>
</comment>
<comment type="pathway">
    <text evidence="1">Pyrimidine metabolism; UMP biosynthesis via de novo pathway; (S)-dihydroorotate from bicarbonate: step 1/3.</text>
</comment>
<comment type="subunit">
    <text evidence="1">Composed of two chains; the small (or glutamine) chain promotes the hydrolysis of glutamine to ammonia, which is used by the large (or ammonia) chain to synthesize carbamoyl phosphate. Tetramer of heterodimers (alpha,beta)4.</text>
</comment>
<comment type="domain">
    <text evidence="1">The large subunit is composed of 2 ATP-grasp domains that are involved in binding the 2 ATP molecules needed for carbamoyl phosphate synthesis. The N-terminal ATP-grasp domain (referred to as the carboxyphosphate synthetic component) catalyzes the ATP-dependent phosphorylation of hydrogencarbonate to carboxyphosphate and the subsequent nucleophilic attack by ammonia to form a carbamate intermediate. The C-terminal ATP-grasp domain (referred to as the carbamoyl phosphate synthetic component) then catalyzes the phosphorylation of carbamate with the second ATP to form the end product carbamoyl phosphate. The reactive and unstable enzyme intermediates are sequentially channeled from one active site to the next through the interior of the protein over a distance of at least 96 A.</text>
</comment>
<comment type="similarity">
    <text evidence="1">Belongs to the CarB family.</text>
</comment>
<sequence>MPKRQDISKILVIGSGPIVIGQAAEFDYSGTQAALSLKEEGYHVILVNSNPATIMTDAEIADKVYIEPLSIDFIERILRKERPDAILPTLGGQTGLNMAKDLSEAGILDELNIELLGTKLSAIEEAEDREEFKALMERLNEPIPESIIATTLEESLNFADTHGYPVIVRPAYTLGGTGGGIAQTHEELSEITANGLELSPVTQVLIERSIAGYKEIEFEVMRDANDNALVVASMENFDPVGIHTGDSIVTAPVQTLSDREVQMMRDAALKIIRALKIEGGVNIQMALDPDSYKYYIIEVNPRVSRSSALASKATGYPIAKMAAKIAVGLTLDEIINPVTGTTKAEFEPALDYVVFKIPRWPFDKFSTADRRLGTQMKATGEVMAIGRNMEEAMLKAVRSLEIGAIGLDDITYKDLSDDELLAALMPARDDRLFMIADLLRRGVSIETIHDKTLINEFFLDKVLHVIEIEQDLASHVGDIDQLQYAKKNGFADETIAKIWGKTAADIRTLRKDKKIKPVYKMVDTVAAEFESATPYYYATYEQENESIISTKKSVLVLGSGPIRIGQGVEFDYATVHAVKAIQRAGYEAIIMNSNPETVSTDFSISDKLYFEPLTLEDVLNVIDLENPVGVVVQFGGQTAINLAQPLLDNGVNILGTSVEDLNRAEDREAFDQVIKELALPQPVGKTATTVDCALAAAQSIGYPVLIRPSYVLGGRAMEIVSSDDELQDYMQRAVKVSNDHPVLIDSYLVGQEAEVDVLSDGETAVIPGIMEHIERAGVHSGDSMSVYPPQYLSQKVQDEMVQASINLAKAMNTIGLMNVQFVIHENTAYVIEVNPRASRTVPFISKVTHLPLAQLATRVMLGEKLSEMGFETGLVPNDDMVHVKAPIFSFTKLPDVDSLLGPEMKSTGEVMGSDINLSKALYKAFIASNIKVPRYGNVLFTVADDDKEEALELAKRFNDLGFALFATAGTGAYLSDNDLPVEVLDKISESDNNAVAALRQQKVQVVINTTQADDRAESDGRLIRNAAIENAVPLFTALDTVSAFLEVLESRSFTVKEMH</sequence>
<organism>
    <name type="scientific">Leuconostoc mesenteroides subsp. mesenteroides (strain ATCC 8293 / DSM 20343 / BCRC 11652 / CCM 1803 / JCM 6124 / NCDO 523 / NBRC 100496 / NCIMB 8023 / NCTC 12954 / NRRL B-1118 / 37Y)</name>
    <dbReference type="NCBI Taxonomy" id="203120"/>
    <lineage>
        <taxon>Bacteria</taxon>
        <taxon>Bacillati</taxon>
        <taxon>Bacillota</taxon>
        <taxon>Bacilli</taxon>
        <taxon>Lactobacillales</taxon>
        <taxon>Lactobacillaceae</taxon>
        <taxon>Leuconostoc</taxon>
    </lineage>
</organism>
<reference key="1">
    <citation type="journal article" date="2006" name="Proc. Natl. Acad. Sci. U.S.A.">
        <title>Comparative genomics of the lactic acid bacteria.</title>
        <authorList>
            <person name="Makarova K.S."/>
            <person name="Slesarev A."/>
            <person name="Wolf Y.I."/>
            <person name="Sorokin A."/>
            <person name="Mirkin B."/>
            <person name="Koonin E.V."/>
            <person name="Pavlov A."/>
            <person name="Pavlova N."/>
            <person name="Karamychev V."/>
            <person name="Polouchine N."/>
            <person name="Shakhova V."/>
            <person name="Grigoriev I."/>
            <person name="Lou Y."/>
            <person name="Rohksar D."/>
            <person name="Lucas S."/>
            <person name="Huang K."/>
            <person name="Goodstein D.M."/>
            <person name="Hawkins T."/>
            <person name="Plengvidhya V."/>
            <person name="Welker D."/>
            <person name="Hughes J."/>
            <person name="Goh Y."/>
            <person name="Benson A."/>
            <person name="Baldwin K."/>
            <person name="Lee J.-H."/>
            <person name="Diaz-Muniz I."/>
            <person name="Dosti B."/>
            <person name="Smeianov V."/>
            <person name="Wechter W."/>
            <person name="Barabote R."/>
            <person name="Lorca G."/>
            <person name="Altermann E."/>
            <person name="Barrangou R."/>
            <person name="Ganesan B."/>
            <person name="Xie Y."/>
            <person name="Rawsthorne H."/>
            <person name="Tamir D."/>
            <person name="Parker C."/>
            <person name="Breidt F."/>
            <person name="Broadbent J.R."/>
            <person name="Hutkins R."/>
            <person name="O'Sullivan D."/>
            <person name="Steele J."/>
            <person name="Unlu G."/>
            <person name="Saier M.H. Jr."/>
            <person name="Klaenhammer T."/>
            <person name="Richardson P."/>
            <person name="Kozyavkin S."/>
            <person name="Weimer B.C."/>
            <person name="Mills D.A."/>
        </authorList>
    </citation>
    <scope>NUCLEOTIDE SEQUENCE [LARGE SCALE GENOMIC DNA]</scope>
    <source>
        <strain>ATCC 8293 / DSM 20343 / BCRC 11652 / CCM 1803 / JCM 6124 / NCDO 523 / NBRC 100496 / NCIMB 8023 / NCTC 12954 / NRRL B-1118 / 37Y</strain>
    </source>
</reference>
<proteinExistence type="inferred from homology"/>
<keyword id="KW-0028">Amino-acid biosynthesis</keyword>
<keyword id="KW-0055">Arginine biosynthesis</keyword>
<keyword id="KW-0067">ATP-binding</keyword>
<keyword id="KW-0436">Ligase</keyword>
<keyword id="KW-0460">Magnesium</keyword>
<keyword id="KW-0464">Manganese</keyword>
<keyword id="KW-0479">Metal-binding</keyword>
<keyword id="KW-0547">Nucleotide-binding</keyword>
<keyword id="KW-0665">Pyrimidine biosynthesis</keyword>
<keyword id="KW-1185">Reference proteome</keyword>
<keyword id="KW-0677">Repeat</keyword>
<feature type="chain" id="PRO_1000066360" description="Carbamoyl phosphate synthase large chain">
    <location>
        <begin position="1"/>
        <end position="1059"/>
    </location>
</feature>
<feature type="domain" description="ATP-grasp 1" evidence="1">
    <location>
        <begin position="133"/>
        <end position="327"/>
    </location>
</feature>
<feature type="domain" description="ATP-grasp 2" evidence="1">
    <location>
        <begin position="671"/>
        <end position="861"/>
    </location>
</feature>
<feature type="domain" description="MGS-like" evidence="1">
    <location>
        <begin position="930"/>
        <end position="1059"/>
    </location>
</feature>
<feature type="region of interest" description="Carboxyphosphate synthetic domain" evidence="1">
    <location>
        <begin position="1"/>
        <end position="401"/>
    </location>
</feature>
<feature type="region of interest" description="Oligomerization domain" evidence="1">
    <location>
        <begin position="402"/>
        <end position="546"/>
    </location>
</feature>
<feature type="region of interest" description="Carbamoyl phosphate synthetic domain" evidence="1">
    <location>
        <begin position="547"/>
        <end position="929"/>
    </location>
</feature>
<feature type="region of interest" description="Allosteric domain" evidence="1">
    <location>
        <begin position="930"/>
        <end position="1059"/>
    </location>
</feature>
<feature type="binding site" evidence="1">
    <location>
        <position position="129"/>
    </location>
    <ligand>
        <name>ATP</name>
        <dbReference type="ChEBI" id="CHEBI:30616"/>
        <label>1</label>
    </ligand>
</feature>
<feature type="binding site" evidence="1">
    <location>
        <position position="169"/>
    </location>
    <ligand>
        <name>ATP</name>
        <dbReference type="ChEBI" id="CHEBI:30616"/>
        <label>1</label>
    </ligand>
</feature>
<feature type="binding site" evidence="1">
    <location>
        <position position="175"/>
    </location>
    <ligand>
        <name>ATP</name>
        <dbReference type="ChEBI" id="CHEBI:30616"/>
        <label>1</label>
    </ligand>
</feature>
<feature type="binding site" evidence="1">
    <location>
        <position position="176"/>
    </location>
    <ligand>
        <name>ATP</name>
        <dbReference type="ChEBI" id="CHEBI:30616"/>
        <label>1</label>
    </ligand>
</feature>
<feature type="binding site" evidence="1">
    <location>
        <position position="208"/>
    </location>
    <ligand>
        <name>ATP</name>
        <dbReference type="ChEBI" id="CHEBI:30616"/>
        <label>1</label>
    </ligand>
</feature>
<feature type="binding site" evidence="1">
    <location>
        <position position="210"/>
    </location>
    <ligand>
        <name>ATP</name>
        <dbReference type="ChEBI" id="CHEBI:30616"/>
        <label>1</label>
    </ligand>
</feature>
<feature type="binding site" evidence="1">
    <location>
        <position position="215"/>
    </location>
    <ligand>
        <name>ATP</name>
        <dbReference type="ChEBI" id="CHEBI:30616"/>
        <label>1</label>
    </ligand>
</feature>
<feature type="binding site" evidence="1">
    <location>
        <position position="241"/>
    </location>
    <ligand>
        <name>ATP</name>
        <dbReference type="ChEBI" id="CHEBI:30616"/>
        <label>1</label>
    </ligand>
</feature>
<feature type="binding site" evidence="1">
    <location>
        <position position="242"/>
    </location>
    <ligand>
        <name>ATP</name>
        <dbReference type="ChEBI" id="CHEBI:30616"/>
        <label>1</label>
    </ligand>
</feature>
<feature type="binding site" evidence="1">
    <location>
        <position position="243"/>
    </location>
    <ligand>
        <name>ATP</name>
        <dbReference type="ChEBI" id="CHEBI:30616"/>
        <label>1</label>
    </ligand>
</feature>
<feature type="binding site" evidence="1">
    <location>
        <position position="284"/>
    </location>
    <ligand>
        <name>ATP</name>
        <dbReference type="ChEBI" id="CHEBI:30616"/>
        <label>1</label>
    </ligand>
</feature>
<feature type="binding site" evidence="1">
    <location>
        <position position="284"/>
    </location>
    <ligand>
        <name>Mg(2+)</name>
        <dbReference type="ChEBI" id="CHEBI:18420"/>
        <label>1</label>
    </ligand>
</feature>
<feature type="binding site" evidence="1">
    <location>
        <position position="284"/>
    </location>
    <ligand>
        <name>Mn(2+)</name>
        <dbReference type="ChEBI" id="CHEBI:29035"/>
        <label>1</label>
    </ligand>
</feature>
<feature type="binding site" evidence="1">
    <location>
        <position position="298"/>
    </location>
    <ligand>
        <name>ATP</name>
        <dbReference type="ChEBI" id="CHEBI:30616"/>
        <label>1</label>
    </ligand>
</feature>
<feature type="binding site" evidence="1">
    <location>
        <position position="298"/>
    </location>
    <ligand>
        <name>Mg(2+)</name>
        <dbReference type="ChEBI" id="CHEBI:18420"/>
        <label>1</label>
    </ligand>
</feature>
<feature type="binding site" evidence="1">
    <location>
        <position position="298"/>
    </location>
    <ligand>
        <name>Mg(2+)</name>
        <dbReference type="ChEBI" id="CHEBI:18420"/>
        <label>2</label>
    </ligand>
</feature>
<feature type="binding site" evidence="1">
    <location>
        <position position="298"/>
    </location>
    <ligand>
        <name>Mn(2+)</name>
        <dbReference type="ChEBI" id="CHEBI:29035"/>
        <label>1</label>
    </ligand>
</feature>
<feature type="binding site" evidence="1">
    <location>
        <position position="298"/>
    </location>
    <ligand>
        <name>Mn(2+)</name>
        <dbReference type="ChEBI" id="CHEBI:29035"/>
        <label>2</label>
    </ligand>
</feature>
<feature type="binding site" evidence="1">
    <location>
        <position position="300"/>
    </location>
    <ligand>
        <name>Mg(2+)</name>
        <dbReference type="ChEBI" id="CHEBI:18420"/>
        <label>2</label>
    </ligand>
</feature>
<feature type="binding site" evidence="1">
    <location>
        <position position="300"/>
    </location>
    <ligand>
        <name>Mn(2+)</name>
        <dbReference type="ChEBI" id="CHEBI:29035"/>
        <label>2</label>
    </ligand>
</feature>
<feature type="binding site" evidence="1">
    <location>
        <position position="707"/>
    </location>
    <ligand>
        <name>ATP</name>
        <dbReference type="ChEBI" id="CHEBI:30616"/>
        <label>2</label>
    </ligand>
</feature>
<feature type="binding site" evidence="1">
    <location>
        <position position="746"/>
    </location>
    <ligand>
        <name>ATP</name>
        <dbReference type="ChEBI" id="CHEBI:30616"/>
        <label>2</label>
    </ligand>
</feature>
<feature type="binding site" evidence="1">
    <location>
        <position position="748"/>
    </location>
    <ligand>
        <name>ATP</name>
        <dbReference type="ChEBI" id="CHEBI:30616"/>
        <label>2</label>
    </ligand>
</feature>
<feature type="binding site" evidence="1">
    <location>
        <position position="752"/>
    </location>
    <ligand>
        <name>ATP</name>
        <dbReference type="ChEBI" id="CHEBI:30616"/>
        <label>2</label>
    </ligand>
</feature>
<feature type="binding site" evidence="1">
    <location>
        <position position="777"/>
    </location>
    <ligand>
        <name>ATP</name>
        <dbReference type="ChEBI" id="CHEBI:30616"/>
        <label>2</label>
    </ligand>
</feature>
<feature type="binding site" evidence="1">
    <location>
        <position position="778"/>
    </location>
    <ligand>
        <name>ATP</name>
        <dbReference type="ChEBI" id="CHEBI:30616"/>
        <label>2</label>
    </ligand>
</feature>
<feature type="binding site" evidence="1">
    <location>
        <position position="779"/>
    </location>
    <ligand>
        <name>ATP</name>
        <dbReference type="ChEBI" id="CHEBI:30616"/>
        <label>2</label>
    </ligand>
</feature>
<feature type="binding site" evidence="1">
    <location>
        <position position="780"/>
    </location>
    <ligand>
        <name>ATP</name>
        <dbReference type="ChEBI" id="CHEBI:30616"/>
        <label>2</label>
    </ligand>
</feature>
<feature type="binding site" evidence="1">
    <location>
        <position position="820"/>
    </location>
    <ligand>
        <name>ATP</name>
        <dbReference type="ChEBI" id="CHEBI:30616"/>
        <label>2</label>
    </ligand>
</feature>
<feature type="binding site" evidence="1">
    <location>
        <position position="820"/>
    </location>
    <ligand>
        <name>Mg(2+)</name>
        <dbReference type="ChEBI" id="CHEBI:18420"/>
        <label>3</label>
    </ligand>
</feature>
<feature type="binding site" evidence="1">
    <location>
        <position position="820"/>
    </location>
    <ligand>
        <name>Mn(2+)</name>
        <dbReference type="ChEBI" id="CHEBI:29035"/>
        <label>3</label>
    </ligand>
</feature>
<feature type="binding site" evidence="1">
    <location>
        <position position="832"/>
    </location>
    <ligand>
        <name>ATP</name>
        <dbReference type="ChEBI" id="CHEBI:30616"/>
        <label>2</label>
    </ligand>
</feature>
<feature type="binding site" evidence="1">
    <location>
        <position position="832"/>
    </location>
    <ligand>
        <name>Mg(2+)</name>
        <dbReference type="ChEBI" id="CHEBI:18420"/>
        <label>3</label>
    </ligand>
</feature>
<feature type="binding site" evidence="1">
    <location>
        <position position="832"/>
    </location>
    <ligand>
        <name>Mg(2+)</name>
        <dbReference type="ChEBI" id="CHEBI:18420"/>
        <label>4</label>
    </ligand>
</feature>
<feature type="binding site" evidence="1">
    <location>
        <position position="832"/>
    </location>
    <ligand>
        <name>Mn(2+)</name>
        <dbReference type="ChEBI" id="CHEBI:29035"/>
        <label>3</label>
    </ligand>
</feature>
<feature type="binding site" evidence="1">
    <location>
        <position position="832"/>
    </location>
    <ligand>
        <name>Mn(2+)</name>
        <dbReference type="ChEBI" id="CHEBI:29035"/>
        <label>4</label>
    </ligand>
</feature>
<feature type="binding site" evidence="1">
    <location>
        <position position="834"/>
    </location>
    <ligand>
        <name>Mg(2+)</name>
        <dbReference type="ChEBI" id="CHEBI:18420"/>
        <label>4</label>
    </ligand>
</feature>
<feature type="binding site" evidence="1">
    <location>
        <position position="834"/>
    </location>
    <ligand>
        <name>Mn(2+)</name>
        <dbReference type="ChEBI" id="CHEBI:29035"/>
        <label>4</label>
    </ligand>
</feature>
<name>CARB_LEUMM</name>
<protein>
    <recommendedName>
        <fullName evidence="1">Carbamoyl phosphate synthase large chain</fullName>
        <ecNumber evidence="1">6.3.4.16</ecNumber>
        <ecNumber evidence="1">6.3.5.5</ecNumber>
    </recommendedName>
    <alternativeName>
        <fullName evidence="1">Carbamoyl phosphate synthetase ammonia chain</fullName>
    </alternativeName>
</protein>
<evidence type="ECO:0000255" key="1">
    <source>
        <dbReference type="HAMAP-Rule" id="MF_01210"/>
    </source>
</evidence>
<accession>Q03WW7</accession>
<dbReference type="EC" id="6.3.4.16" evidence="1"/>
<dbReference type="EC" id="6.3.5.5" evidence="1"/>
<dbReference type="EMBL" id="CP000414">
    <property type="protein sequence ID" value="ABJ62305.1"/>
    <property type="molecule type" value="Genomic_DNA"/>
</dbReference>
<dbReference type="RefSeq" id="WP_011679933.1">
    <property type="nucleotide sequence ID" value="NC_008531.1"/>
</dbReference>
<dbReference type="SMR" id="Q03WW7"/>
<dbReference type="EnsemblBacteria" id="ABJ62305">
    <property type="protein sequence ID" value="ABJ62305"/>
    <property type="gene ID" value="LEUM_1207"/>
</dbReference>
<dbReference type="GeneID" id="29575997"/>
<dbReference type="KEGG" id="lme:LEUM_1207"/>
<dbReference type="eggNOG" id="COG0458">
    <property type="taxonomic scope" value="Bacteria"/>
</dbReference>
<dbReference type="HOGENOM" id="CLU_000513_1_0_9"/>
<dbReference type="UniPathway" id="UPA00068">
    <property type="reaction ID" value="UER00171"/>
</dbReference>
<dbReference type="UniPathway" id="UPA00070">
    <property type="reaction ID" value="UER00115"/>
</dbReference>
<dbReference type="Proteomes" id="UP000000362">
    <property type="component" value="Chromosome"/>
</dbReference>
<dbReference type="GO" id="GO:0005737">
    <property type="term" value="C:cytoplasm"/>
    <property type="evidence" value="ECO:0007669"/>
    <property type="project" value="TreeGrafter"/>
</dbReference>
<dbReference type="GO" id="GO:0005524">
    <property type="term" value="F:ATP binding"/>
    <property type="evidence" value="ECO:0007669"/>
    <property type="project" value="UniProtKB-UniRule"/>
</dbReference>
<dbReference type="GO" id="GO:0004087">
    <property type="term" value="F:carbamoyl-phosphate synthase (ammonia) activity"/>
    <property type="evidence" value="ECO:0007669"/>
    <property type="project" value="RHEA"/>
</dbReference>
<dbReference type="GO" id="GO:0004088">
    <property type="term" value="F:carbamoyl-phosphate synthase (glutamine-hydrolyzing) activity"/>
    <property type="evidence" value="ECO:0007669"/>
    <property type="project" value="UniProtKB-UniRule"/>
</dbReference>
<dbReference type="GO" id="GO:0046872">
    <property type="term" value="F:metal ion binding"/>
    <property type="evidence" value="ECO:0007669"/>
    <property type="project" value="UniProtKB-KW"/>
</dbReference>
<dbReference type="GO" id="GO:0044205">
    <property type="term" value="P:'de novo' UMP biosynthetic process"/>
    <property type="evidence" value="ECO:0007669"/>
    <property type="project" value="UniProtKB-UniRule"/>
</dbReference>
<dbReference type="GO" id="GO:0006541">
    <property type="term" value="P:glutamine metabolic process"/>
    <property type="evidence" value="ECO:0007669"/>
    <property type="project" value="TreeGrafter"/>
</dbReference>
<dbReference type="GO" id="GO:0006526">
    <property type="term" value="P:L-arginine biosynthetic process"/>
    <property type="evidence" value="ECO:0007669"/>
    <property type="project" value="UniProtKB-UniRule"/>
</dbReference>
<dbReference type="CDD" id="cd01424">
    <property type="entry name" value="MGS_CPS_II"/>
    <property type="match status" value="1"/>
</dbReference>
<dbReference type="FunFam" id="1.10.1030.10:FF:000002">
    <property type="entry name" value="Carbamoyl-phosphate synthase large chain"/>
    <property type="match status" value="1"/>
</dbReference>
<dbReference type="FunFam" id="3.30.1490.20:FF:000001">
    <property type="entry name" value="Carbamoyl-phosphate synthase large chain"/>
    <property type="match status" value="1"/>
</dbReference>
<dbReference type="FunFam" id="3.30.470.20:FF:000001">
    <property type="entry name" value="Carbamoyl-phosphate synthase large chain"/>
    <property type="match status" value="1"/>
</dbReference>
<dbReference type="FunFam" id="3.30.470.20:FF:000026">
    <property type="entry name" value="Carbamoyl-phosphate synthase large chain"/>
    <property type="match status" value="1"/>
</dbReference>
<dbReference type="FunFam" id="3.40.50.20:FF:000001">
    <property type="entry name" value="Carbamoyl-phosphate synthase large chain"/>
    <property type="match status" value="2"/>
</dbReference>
<dbReference type="Gene3D" id="3.40.50.20">
    <property type="match status" value="2"/>
</dbReference>
<dbReference type="Gene3D" id="3.30.1490.20">
    <property type="entry name" value="ATP-grasp fold, A domain"/>
    <property type="match status" value="1"/>
</dbReference>
<dbReference type="Gene3D" id="3.30.470.20">
    <property type="entry name" value="ATP-grasp fold, B domain"/>
    <property type="match status" value="2"/>
</dbReference>
<dbReference type="Gene3D" id="1.10.1030.10">
    <property type="entry name" value="Carbamoyl-phosphate synthetase, large subunit oligomerisation domain"/>
    <property type="match status" value="1"/>
</dbReference>
<dbReference type="Gene3D" id="3.40.50.1380">
    <property type="entry name" value="Methylglyoxal synthase-like domain"/>
    <property type="match status" value="1"/>
</dbReference>
<dbReference type="HAMAP" id="MF_01210_A">
    <property type="entry name" value="CPSase_L_chain_A"/>
    <property type="match status" value="1"/>
</dbReference>
<dbReference type="HAMAP" id="MF_01210_B">
    <property type="entry name" value="CPSase_L_chain_B"/>
    <property type="match status" value="1"/>
</dbReference>
<dbReference type="InterPro" id="IPR011761">
    <property type="entry name" value="ATP-grasp"/>
</dbReference>
<dbReference type="InterPro" id="IPR013815">
    <property type="entry name" value="ATP_grasp_subdomain_1"/>
</dbReference>
<dbReference type="InterPro" id="IPR006275">
    <property type="entry name" value="CarbamoylP_synth_lsu"/>
</dbReference>
<dbReference type="InterPro" id="IPR005480">
    <property type="entry name" value="CarbamoylP_synth_lsu_oligo"/>
</dbReference>
<dbReference type="InterPro" id="IPR036897">
    <property type="entry name" value="CarbamoylP_synth_lsu_oligo_sf"/>
</dbReference>
<dbReference type="InterPro" id="IPR005479">
    <property type="entry name" value="CbamoylP_synth_lsu-like_ATP-bd"/>
</dbReference>
<dbReference type="InterPro" id="IPR005483">
    <property type="entry name" value="CbamoylP_synth_lsu_CPSase_dom"/>
</dbReference>
<dbReference type="InterPro" id="IPR011607">
    <property type="entry name" value="MGS-like_dom"/>
</dbReference>
<dbReference type="InterPro" id="IPR036914">
    <property type="entry name" value="MGS-like_dom_sf"/>
</dbReference>
<dbReference type="InterPro" id="IPR033937">
    <property type="entry name" value="MGS_CPS_CarB"/>
</dbReference>
<dbReference type="InterPro" id="IPR016185">
    <property type="entry name" value="PreATP-grasp_dom_sf"/>
</dbReference>
<dbReference type="NCBIfam" id="TIGR01369">
    <property type="entry name" value="CPSaseII_lrg"/>
    <property type="match status" value="1"/>
</dbReference>
<dbReference type="NCBIfam" id="NF003671">
    <property type="entry name" value="PRK05294.1"/>
    <property type="match status" value="1"/>
</dbReference>
<dbReference type="NCBIfam" id="NF009455">
    <property type="entry name" value="PRK12815.1"/>
    <property type="match status" value="1"/>
</dbReference>
<dbReference type="PANTHER" id="PTHR11405:SF53">
    <property type="entry name" value="CARBAMOYL-PHOSPHATE SYNTHASE [AMMONIA], MITOCHONDRIAL"/>
    <property type="match status" value="1"/>
</dbReference>
<dbReference type="PANTHER" id="PTHR11405">
    <property type="entry name" value="CARBAMOYLTRANSFERASE FAMILY MEMBER"/>
    <property type="match status" value="1"/>
</dbReference>
<dbReference type="Pfam" id="PF02786">
    <property type="entry name" value="CPSase_L_D2"/>
    <property type="match status" value="2"/>
</dbReference>
<dbReference type="Pfam" id="PF02787">
    <property type="entry name" value="CPSase_L_D3"/>
    <property type="match status" value="1"/>
</dbReference>
<dbReference type="Pfam" id="PF02142">
    <property type="entry name" value="MGS"/>
    <property type="match status" value="1"/>
</dbReference>
<dbReference type="PRINTS" id="PR00098">
    <property type="entry name" value="CPSASE"/>
</dbReference>
<dbReference type="SMART" id="SM01096">
    <property type="entry name" value="CPSase_L_D3"/>
    <property type="match status" value="1"/>
</dbReference>
<dbReference type="SMART" id="SM00851">
    <property type="entry name" value="MGS"/>
    <property type="match status" value="1"/>
</dbReference>
<dbReference type="SUPFAM" id="SSF48108">
    <property type="entry name" value="Carbamoyl phosphate synthetase, large subunit connection domain"/>
    <property type="match status" value="1"/>
</dbReference>
<dbReference type="SUPFAM" id="SSF56059">
    <property type="entry name" value="Glutathione synthetase ATP-binding domain-like"/>
    <property type="match status" value="2"/>
</dbReference>
<dbReference type="SUPFAM" id="SSF52335">
    <property type="entry name" value="Methylglyoxal synthase-like"/>
    <property type="match status" value="1"/>
</dbReference>
<dbReference type="SUPFAM" id="SSF52440">
    <property type="entry name" value="PreATP-grasp domain"/>
    <property type="match status" value="2"/>
</dbReference>
<dbReference type="PROSITE" id="PS50975">
    <property type="entry name" value="ATP_GRASP"/>
    <property type="match status" value="2"/>
</dbReference>
<dbReference type="PROSITE" id="PS00866">
    <property type="entry name" value="CPSASE_1"/>
    <property type="match status" value="2"/>
</dbReference>
<dbReference type="PROSITE" id="PS00867">
    <property type="entry name" value="CPSASE_2"/>
    <property type="match status" value="2"/>
</dbReference>
<dbReference type="PROSITE" id="PS51855">
    <property type="entry name" value="MGS"/>
    <property type="match status" value="1"/>
</dbReference>
<gene>
    <name evidence="1" type="primary">carB</name>
    <name type="ordered locus">LEUM_1207</name>
</gene>